<feature type="chain" id="PRO_0000305441" description="Pantothenate synthetase">
    <location>
        <begin position="1"/>
        <end position="283"/>
    </location>
</feature>
<feature type="active site" description="Proton donor" evidence="1">
    <location>
        <position position="37"/>
    </location>
</feature>
<feature type="binding site" evidence="1">
    <location>
        <begin position="30"/>
        <end position="37"/>
    </location>
    <ligand>
        <name>ATP</name>
        <dbReference type="ChEBI" id="CHEBI:30616"/>
    </ligand>
</feature>
<feature type="binding site" evidence="1">
    <location>
        <position position="61"/>
    </location>
    <ligand>
        <name>(R)-pantoate</name>
        <dbReference type="ChEBI" id="CHEBI:15980"/>
    </ligand>
</feature>
<feature type="binding site" evidence="1">
    <location>
        <position position="61"/>
    </location>
    <ligand>
        <name>beta-alanine</name>
        <dbReference type="ChEBI" id="CHEBI:57966"/>
    </ligand>
</feature>
<feature type="binding site" evidence="1">
    <location>
        <begin position="147"/>
        <end position="150"/>
    </location>
    <ligand>
        <name>ATP</name>
        <dbReference type="ChEBI" id="CHEBI:30616"/>
    </ligand>
</feature>
<feature type="binding site" evidence="1">
    <location>
        <position position="153"/>
    </location>
    <ligand>
        <name>(R)-pantoate</name>
        <dbReference type="ChEBI" id="CHEBI:15980"/>
    </ligand>
</feature>
<feature type="binding site" evidence="1">
    <location>
        <position position="176"/>
    </location>
    <ligand>
        <name>ATP</name>
        <dbReference type="ChEBI" id="CHEBI:30616"/>
    </ligand>
</feature>
<feature type="binding site" evidence="1">
    <location>
        <begin position="184"/>
        <end position="187"/>
    </location>
    <ligand>
        <name>ATP</name>
        <dbReference type="ChEBI" id="CHEBI:30616"/>
    </ligand>
</feature>
<dbReference type="EC" id="6.3.2.1" evidence="1"/>
<dbReference type="EMBL" id="CP000527">
    <property type="protein sequence ID" value="ABM27808.1"/>
    <property type="molecule type" value="Genomic_DNA"/>
</dbReference>
<dbReference type="RefSeq" id="WP_010939719.1">
    <property type="nucleotide sequence ID" value="NC_008751.1"/>
</dbReference>
<dbReference type="SMR" id="A1VBJ2"/>
<dbReference type="KEGG" id="dvl:Dvul_0787"/>
<dbReference type="HOGENOM" id="CLU_047148_0_0_7"/>
<dbReference type="UniPathway" id="UPA00028">
    <property type="reaction ID" value="UER00005"/>
</dbReference>
<dbReference type="Proteomes" id="UP000009173">
    <property type="component" value="Chromosome"/>
</dbReference>
<dbReference type="GO" id="GO:0005829">
    <property type="term" value="C:cytosol"/>
    <property type="evidence" value="ECO:0007669"/>
    <property type="project" value="TreeGrafter"/>
</dbReference>
<dbReference type="GO" id="GO:0005524">
    <property type="term" value="F:ATP binding"/>
    <property type="evidence" value="ECO:0007669"/>
    <property type="project" value="UniProtKB-KW"/>
</dbReference>
<dbReference type="GO" id="GO:0004592">
    <property type="term" value="F:pantoate-beta-alanine ligase activity"/>
    <property type="evidence" value="ECO:0007669"/>
    <property type="project" value="UniProtKB-UniRule"/>
</dbReference>
<dbReference type="GO" id="GO:0015940">
    <property type="term" value="P:pantothenate biosynthetic process"/>
    <property type="evidence" value="ECO:0007669"/>
    <property type="project" value="UniProtKB-UniRule"/>
</dbReference>
<dbReference type="CDD" id="cd00560">
    <property type="entry name" value="PanC"/>
    <property type="match status" value="1"/>
</dbReference>
<dbReference type="Gene3D" id="3.40.50.620">
    <property type="entry name" value="HUPs"/>
    <property type="match status" value="1"/>
</dbReference>
<dbReference type="Gene3D" id="3.30.1300.10">
    <property type="entry name" value="Pantoate-beta-alanine ligase, C-terminal domain"/>
    <property type="match status" value="1"/>
</dbReference>
<dbReference type="HAMAP" id="MF_00158">
    <property type="entry name" value="PanC"/>
    <property type="match status" value="1"/>
</dbReference>
<dbReference type="InterPro" id="IPR003721">
    <property type="entry name" value="Pantoate_ligase"/>
</dbReference>
<dbReference type="InterPro" id="IPR042176">
    <property type="entry name" value="Pantoate_ligase_C"/>
</dbReference>
<dbReference type="InterPro" id="IPR014729">
    <property type="entry name" value="Rossmann-like_a/b/a_fold"/>
</dbReference>
<dbReference type="NCBIfam" id="TIGR00018">
    <property type="entry name" value="panC"/>
    <property type="match status" value="1"/>
</dbReference>
<dbReference type="PANTHER" id="PTHR21299">
    <property type="entry name" value="CYTIDYLATE KINASE/PANTOATE-BETA-ALANINE LIGASE"/>
    <property type="match status" value="1"/>
</dbReference>
<dbReference type="PANTHER" id="PTHR21299:SF1">
    <property type="entry name" value="PANTOATE--BETA-ALANINE LIGASE"/>
    <property type="match status" value="1"/>
</dbReference>
<dbReference type="Pfam" id="PF02569">
    <property type="entry name" value="Pantoate_ligase"/>
    <property type="match status" value="1"/>
</dbReference>
<dbReference type="SUPFAM" id="SSF52374">
    <property type="entry name" value="Nucleotidylyl transferase"/>
    <property type="match status" value="1"/>
</dbReference>
<organism>
    <name type="scientific">Nitratidesulfovibrio vulgaris (strain DP4)</name>
    <name type="common">Desulfovibrio vulgaris</name>
    <dbReference type="NCBI Taxonomy" id="391774"/>
    <lineage>
        <taxon>Bacteria</taxon>
        <taxon>Pseudomonadati</taxon>
        <taxon>Thermodesulfobacteriota</taxon>
        <taxon>Desulfovibrionia</taxon>
        <taxon>Desulfovibrionales</taxon>
        <taxon>Desulfovibrionaceae</taxon>
        <taxon>Nitratidesulfovibrio</taxon>
    </lineage>
</organism>
<comment type="function">
    <text evidence="1">Catalyzes the condensation of pantoate with beta-alanine in an ATP-dependent reaction via a pantoyl-adenylate intermediate.</text>
</comment>
<comment type="catalytic activity">
    <reaction evidence="1">
        <text>(R)-pantoate + beta-alanine + ATP = (R)-pantothenate + AMP + diphosphate + H(+)</text>
        <dbReference type="Rhea" id="RHEA:10912"/>
        <dbReference type="ChEBI" id="CHEBI:15378"/>
        <dbReference type="ChEBI" id="CHEBI:15980"/>
        <dbReference type="ChEBI" id="CHEBI:29032"/>
        <dbReference type="ChEBI" id="CHEBI:30616"/>
        <dbReference type="ChEBI" id="CHEBI:33019"/>
        <dbReference type="ChEBI" id="CHEBI:57966"/>
        <dbReference type="ChEBI" id="CHEBI:456215"/>
        <dbReference type="EC" id="6.3.2.1"/>
    </reaction>
</comment>
<comment type="pathway">
    <text evidence="1">Cofactor biosynthesis; (R)-pantothenate biosynthesis; (R)-pantothenate from (R)-pantoate and beta-alanine: step 1/1.</text>
</comment>
<comment type="subunit">
    <text evidence="1">Homodimer.</text>
</comment>
<comment type="subcellular location">
    <subcellularLocation>
        <location evidence="1">Cytoplasm</location>
    </subcellularLocation>
</comment>
<comment type="miscellaneous">
    <text evidence="1">The reaction proceeds by a bi uni uni bi ping pong mechanism.</text>
</comment>
<comment type="similarity">
    <text evidence="1">Belongs to the pantothenate synthetase family.</text>
</comment>
<sequence length="283" mass="31345">MQIITEPQTIQQACLRWRADGVHTALVPTMGYYHAGHESLMAHARAVSEKVIVSLFVNPAQFGPGEDFAAYPRDLERDAAMAEAQGVDVLFAPKAEDLYKKDHATWVEVPALSQTMCGLSRPTHFRGVCTVVTKLLMLTMPRIAVFGQKDWQQVAVIRRMVRDLNIPVDIVGRPIVREPDGLAMSSRNIYLTAEERLQAPHIHHGLALGRAITQSGERDAETIKTAIRRYWAQNLPGGEEDYLTIVDPVSLEPVDRLTGATLCATAVRVGQARLLDNMMLLGD</sequence>
<name>PANC_NITV4</name>
<proteinExistence type="inferred from homology"/>
<gene>
    <name evidence="1" type="primary">panC</name>
    <name type="ordered locus">Dvul_0787</name>
</gene>
<reference key="1">
    <citation type="journal article" date="2009" name="Environ. Microbiol.">
        <title>Contribution of mobile genetic elements to Desulfovibrio vulgaris genome plasticity.</title>
        <authorList>
            <person name="Walker C.B."/>
            <person name="Stolyar S."/>
            <person name="Chivian D."/>
            <person name="Pinel N."/>
            <person name="Gabster J.A."/>
            <person name="Dehal P.S."/>
            <person name="He Z."/>
            <person name="Yang Z.K."/>
            <person name="Yen H.C."/>
            <person name="Zhou J."/>
            <person name="Wall J.D."/>
            <person name="Hazen T.C."/>
            <person name="Arkin A.P."/>
            <person name="Stahl D.A."/>
        </authorList>
    </citation>
    <scope>NUCLEOTIDE SEQUENCE [LARGE SCALE GENOMIC DNA]</scope>
    <source>
        <strain>DP4</strain>
    </source>
</reference>
<accession>A1VBJ2</accession>
<keyword id="KW-0067">ATP-binding</keyword>
<keyword id="KW-0963">Cytoplasm</keyword>
<keyword id="KW-0436">Ligase</keyword>
<keyword id="KW-0547">Nucleotide-binding</keyword>
<keyword id="KW-0566">Pantothenate biosynthesis</keyword>
<protein>
    <recommendedName>
        <fullName evidence="1">Pantothenate synthetase</fullName>
        <shortName evidence="1">PS</shortName>
        <ecNumber evidence="1">6.3.2.1</ecNumber>
    </recommendedName>
    <alternativeName>
        <fullName evidence="1">Pantoate--beta-alanine ligase</fullName>
    </alternativeName>
    <alternativeName>
        <fullName evidence="1">Pantoate-activating enzyme</fullName>
    </alternativeName>
</protein>
<evidence type="ECO:0000255" key="1">
    <source>
        <dbReference type="HAMAP-Rule" id="MF_00158"/>
    </source>
</evidence>